<keyword id="KW-0021">Allosteric enzyme</keyword>
<keyword id="KW-0067">ATP-binding</keyword>
<keyword id="KW-0963">Cytoplasm</keyword>
<keyword id="KW-0324">Glycolysis</keyword>
<keyword id="KW-0418">Kinase</keyword>
<keyword id="KW-0460">Magnesium</keyword>
<keyword id="KW-0479">Metal-binding</keyword>
<keyword id="KW-0547">Nucleotide-binding</keyword>
<keyword id="KW-1185">Reference proteome</keyword>
<keyword id="KW-0808">Transferase</keyword>
<dbReference type="EC" id="2.7.1.11" evidence="1"/>
<dbReference type="EMBL" id="CP000153">
    <property type="protein sequence ID" value="ABB43828.1"/>
    <property type="molecule type" value="Genomic_DNA"/>
</dbReference>
<dbReference type="RefSeq" id="WP_011372182.1">
    <property type="nucleotide sequence ID" value="NC_007575.1"/>
</dbReference>
<dbReference type="SMR" id="Q30T53"/>
<dbReference type="STRING" id="326298.Suden_0549"/>
<dbReference type="KEGG" id="tdn:Suden_0549"/>
<dbReference type="eggNOG" id="COG0205">
    <property type="taxonomic scope" value="Bacteria"/>
</dbReference>
<dbReference type="HOGENOM" id="CLU_020655_0_1_7"/>
<dbReference type="OrthoDB" id="9802503at2"/>
<dbReference type="UniPathway" id="UPA00109">
    <property type="reaction ID" value="UER00182"/>
</dbReference>
<dbReference type="Proteomes" id="UP000002714">
    <property type="component" value="Chromosome"/>
</dbReference>
<dbReference type="GO" id="GO:0005945">
    <property type="term" value="C:6-phosphofructokinase complex"/>
    <property type="evidence" value="ECO:0007669"/>
    <property type="project" value="TreeGrafter"/>
</dbReference>
<dbReference type="GO" id="GO:0003872">
    <property type="term" value="F:6-phosphofructokinase activity"/>
    <property type="evidence" value="ECO:0007669"/>
    <property type="project" value="UniProtKB-UniRule"/>
</dbReference>
<dbReference type="GO" id="GO:0016208">
    <property type="term" value="F:AMP binding"/>
    <property type="evidence" value="ECO:0007669"/>
    <property type="project" value="TreeGrafter"/>
</dbReference>
<dbReference type="GO" id="GO:0005524">
    <property type="term" value="F:ATP binding"/>
    <property type="evidence" value="ECO:0007669"/>
    <property type="project" value="UniProtKB-KW"/>
</dbReference>
<dbReference type="GO" id="GO:0070095">
    <property type="term" value="F:fructose-6-phosphate binding"/>
    <property type="evidence" value="ECO:0007669"/>
    <property type="project" value="TreeGrafter"/>
</dbReference>
<dbReference type="GO" id="GO:0042802">
    <property type="term" value="F:identical protein binding"/>
    <property type="evidence" value="ECO:0007669"/>
    <property type="project" value="TreeGrafter"/>
</dbReference>
<dbReference type="GO" id="GO:0046872">
    <property type="term" value="F:metal ion binding"/>
    <property type="evidence" value="ECO:0007669"/>
    <property type="project" value="UniProtKB-KW"/>
</dbReference>
<dbReference type="GO" id="GO:0048029">
    <property type="term" value="F:monosaccharide binding"/>
    <property type="evidence" value="ECO:0007669"/>
    <property type="project" value="TreeGrafter"/>
</dbReference>
<dbReference type="GO" id="GO:0061621">
    <property type="term" value="P:canonical glycolysis"/>
    <property type="evidence" value="ECO:0007669"/>
    <property type="project" value="TreeGrafter"/>
</dbReference>
<dbReference type="GO" id="GO:0030388">
    <property type="term" value="P:fructose 1,6-bisphosphate metabolic process"/>
    <property type="evidence" value="ECO:0007669"/>
    <property type="project" value="TreeGrafter"/>
</dbReference>
<dbReference type="GO" id="GO:0006002">
    <property type="term" value="P:fructose 6-phosphate metabolic process"/>
    <property type="evidence" value="ECO:0007669"/>
    <property type="project" value="InterPro"/>
</dbReference>
<dbReference type="FunFam" id="3.40.50.460:FF:000002">
    <property type="entry name" value="ATP-dependent 6-phosphofructokinase"/>
    <property type="match status" value="1"/>
</dbReference>
<dbReference type="Gene3D" id="3.40.50.450">
    <property type="match status" value="1"/>
</dbReference>
<dbReference type="Gene3D" id="3.40.50.460">
    <property type="entry name" value="Phosphofructokinase domain"/>
    <property type="match status" value="1"/>
</dbReference>
<dbReference type="HAMAP" id="MF_00339">
    <property type="entry name" value="Phosphofructokinase_I_B1"/>
    <property type="match status" value="1"/>
</dbReference>
<dbReference type="InterPro" id="IPR022953">
    <property type="entry name" value="ATP_PFK"/>
</dbReference>
<dbReference type="InterPro" id="IPR012003">
    <property type="entry name" value="ATP_PFK_prok-type"/>
</dbReference>
<dbReference type="InterPro" id="IPR012828">
    <property type="entry name" value="PFKA_ATP_prok"/>
</dbReference>
<dbReference type="InterPro" id="IPR015912">
    <property type="entry name" value="Phosphofructokinase_CS"/>
</dbReference>
<dbReference type="InterPro" id="IPR000023">
    <property type="entry name" value="Phosphofructokinase_dom"/>
</dbReference>
<dbReference type="InterPro" id="IPR035966">
    <property type="entry name" value="PKF_sf"/>
</dbReference>
<dbReference type="NCBIfam" id="NF002872">
    <property type="entry name" value="PRK03202.1"/>
    <property type="match status" value="1"/>
</dbReference>
<dbReference type="PANTHER" id="PTHR13697:SF4">
    <property type="entry name" value="ATP-DEPENDENT 6-PHOSPHOFRUCTOKINASE"/>
    <property type="match status" value="1"/>
</dbReference>
<dbReference type="PANTHER" id="PTHR13697">
    <property type="entry name" value="PHOSPHOFRUCTOKINASE"/>
    <property type="match status" value="1"/>
</dbReference>
<dbReference type="Pfam" id="PF00365">
    <property type="entry name" value="PFK"/>
    <property type="match status" value="1"/>
</dbReference>
<dbReference type="PIRSF" id="PIRSF000532">
    <property type="entry name" value="ATP_PFK_prok"/>
    <property type="match status" value="1"/>
</dbReference>
<dbReference type="PRINTS" id="PR00476">
    <property type="entry name" value="PHFRCTKINASE"/>
</dbReference>
<dbReference type="SUPFAM" id="SSF53784">
    <property type="entry name" value="Phosphofructokinase"/>
    <property type="match status" value="1"/>
</dbReference>
<dbReference type="PROSITE" id="PS00433">
    <property type="entry name" value="PHOSPHOFRUCTOKINASE"/>
    <property type="match status" value="1"/>
</dbReference>
<feature type="chain" id="PRO_1000072058" description="ATP-dependent 6-phosphofructokinase">
    <location>
        <begin position="1"/>
        <end position="319"/>
    </location>
</feature>
<feature type="active site" description="Proton acceptor" evidence="1">
    <location>
        <position position="128"/>
    </location>
</feature>
<feature type="binding site" evidence="1">
    <location>
        <position position="11"/>
    </location>
    <ligand>
        <name>ATP</name>
        <dbReference type="ChEBI" id="CHEBI:30616"/>
    </ligand>
</feature>
<feature type="binding site" evidence="1">
    <location>
        <begin position="72"/>
        <end position="73"/>
    </location>
    <ligand>
        <name>ATP</name>
        <dbReference type="ChEBI" id="CHEBI:30616"/>
    </ligand>
</feature>
<feature type="binding site" evidence="1">
    <location>
        <begin position="102"/>
        <end position="105"/>
    </location>
    <ligand>
        <name>ATP</name>
        <dbReference type="ChEBI" id="CHEBI:30616"/>
    </ligand>
</feature>
<feature type="binding site" evidence="1">
    <location>
        <position position="103"/>
    </location>
    <ligand>
        <name>Mg(2+)</name>
        <dbReference type="ChEBI" id="CHEBI:18420"/>
        <note>catalytic</note>
    </ligand>
</feature>
<feature type="binding site" description="in other chain" evidence="1">
    <location>
        <begin position="126"/>
        <end position="128"/>
    </location>
    <ligand>
        <name>substrate</name>
        <note>ligand shared between dimeric partners</note>
    </ligand>
</feature>
<feature type="binding site" evidence="1">
    <location>
        <position position="155"/>
    </location>
    <ligand>
        <name>ADP</name>
        <dbReference type="ChEBI" id="CHEBI:456216"/>
        <note>allosteric activator</note>
    </ligand>
</feature>
<feature type="binding site" evidence="1">
    <location>
        <position position="163"/>
    </location>
    <ligand>
        <name>substrate</name>
        <note>ligand shared between dimeric partners</note>
    </ligand>
</feature>
<feature type="binding site" description="in other chain" evidence="1">
    <location>
        <begin position="170"/>
        <end position="172"/>
    </location>
    <ligand>
        <name>substrate</name>
        <note>ligand shared between dimeric partners</note>
    </ligand>
</feature>
<feature type="binding site" evidence="1">
    <location>
        <begin position="186"/>
        <end position="188"/>
    </location>
    <ligand>
        <name>ADP</name>
        <dbReference type="ChEBI" id="CHEBI:456216"/>
        <note>allosteric activator</note>
    </ligand>
</feature>
<feature type="binding site" description="in other chain" evidence="1">
    <location>
        <position position="223"/>
    </location>
    <ligand>
        <name>substrate</name>
        <note>ligand shared between dimeric partners</note>
    </ligand>
</feature>
<feature type="binding site" evidence="1">
    <location>
        <position position="245"/>
    </location>
    <ligand>
        <name>substrate</name>
        <note>ligand shared between dimeric partners</note>
    </ligand>
</feature>
<feature type="binding site" description="in other chain" evidence="1">
    <location>
        <begin position="251"/>
        <end position="254"/>
    </location>
    <ligand>
        <name>substrate</name>
        <note>ligand shared between dimeric partners</note>
    </ligand>
</feature>
<sequence length="319" mass="35330">MKNIAILSSGGDVSGMNPAIKHFVEYALHNGLTPYFVYNGFEGLIDNKITKASHSDVAGIINRGGTILGSSRSKRFMLKNYREVAKKNLDALDIDMLIVLGGDGSFRGMDIFYKEHGVKFCGIPSTIDNDINGTIYCLGVDTALNVIKDSIDNIRDTASSFSRAFVIETMGRDCGYLALVSSLCSGAELCLIPEVEYNLSSYEDSFKEQIKNGRKYFIVIVSEGIKDNSKEIAEWLEQKVGIESRVTVLGHTQRGGTPSIYDRLMAYKFVNHAIDALLGDINSSVVCYSKTGFIHKDIDEITSQKYMLDPELLSYLKKF</sequence>
<evidence type="ECO:0000255" key="1">
    <source>
        <dbReference type="HAMAP-Rule" id="MF_00339"/>
    </source>
</evidence>
<organism>
    <name type="scientific">Sulfurimonas denitrificans (strain ATCC 33889 / DSM 1251)</name>
    <name type="common">Thiomicrospira denitrificans (strain ATCC 33889 / DSM 1251)</name>
    <dbReference type="NCBI Taxonomy" id="326298"/>
    <lineage>
        <taxon>Bacteria</taxon>
        <taxon>Pseudomonadati</taxon>
        <taxon>Campylobacterota</taxon>
        <taxon>Epsilonproteobacteria</taxon>
        <taxon>Campylobacterales</taxon>
        <taxon>Sulfurimonadaceae</taxon>
        <taxon>Sulfurimonas</taxon>
    </lineage>
</organism>
<accession>Q30T53</accession>
<proteinExistence type="inferred from homology"/>
<gene>
    <name evidence="1" type="primary">pfkA</name>
    <name type="ordered locus">Suden_0549</name>
</gene>
<reference key="1">
    <citation type="journal article" date="2008" name="Appl. Environ. Microbiol.">
        <title>Genome of the epsilonproteobacterial chemolithoautotroph Sulfurimonas denitrificans.</title>
        <authorList>
            <person name="Sievert S.M."/>
            <person name="Scott K.M."/>
            <person name="Klotz M.G."/>
            <person name="Chain P.S.G."/>
            <person name="Hauser L.J."/>
            <person name="Hemp J."/>
            <person name="Huegler M."/>
            <person name="Land M."/>
            <person name="Lapidus A."/>
            <person name="Larimer F.W."/>
            <person name="Lucas S."/>
            <person name="Malfatti S.A."/>
            <person name="Meyer F."/>
            <person name="Paulsen I.T."/>
            <person name="Ren Q."/>
            <person name="Simon J."/>
            <person name="Bailey K."/>
            <person name="Diaz E."/>
            <person name="Fitzpatrick K.A."/>
            <person name="Glover B."/>
            <person name="Gwatney N."/>
            <person name="Korajkic A."/>
            <person name="Long A."/>
            <person name="Mobberley J.M."/>
            <person name="Pantry S.N."/>
            <person name="Pazder G."/>
            <person name="Peterson S."/>
            <person name="Quintanilla J.D."/>
            <person name="Sprinkle R."/>
            <person name="Stephens J."/>
            <person name="Thomas P."/>
            <person name="Vaughn R."/>
            <person name="Weber M.J."/>
            <person name="Wooten L.L."/>
        </authorList>
    </citation>
    <scope>NUCLEOTIDE SEQUENCE [LARGE SCALE GENOMIC DNA]</scope>
    <source>
        <strain>ATCC 33889 / DSM 1251</strain>
    </source>
</reference>
<protein>
    <recommendedName>
        <fullName evidence="1">ATP-dependent 6-phosphofructokinase</fullName>
        <shortName evidence="1">ATP-PFK</shortName>
        <shortName evidence="1">Phosphofructokinase</shortName>
        <ecNumber evidence="1">2.7.1.11</ecNumber>
    </recommendedName>
    <alternativeName>
        <fullName evidence="1">Phosphohexokinase</fullName>
    </alternativeName>
</protein>
<name>PFKA_SULDN</name>
<comment type="function">
    <text evidence="1">Catalyzes the phosphorylation of D-fructose 6-phosphate to fructose 1,6-bisphosphate by ATP, the first committing step of glycolysis.</text>
</comment>
<comment type="catalytic activity">
    <reaction evidence="1">
        <text>beta-D-fructose 6-phosphate + ATP = beta-D-fructose 1,6-bisphosphate + ADP + H(+)</text>
        <dbReference type="Rhea" id="RHEA:16109"/>
        <dbReference type="ChEBI" id="CHEBI:15378"/>
        <dbReference type="ChEBI" id="CHEBI:30616"/>
        <dbReference type="ChEBI" id="CHEBI:32966"/>
        <dbReference type="ChEBI" id="CHEBI:57634"/>
        <dbReference type="ChEBI" id="CHEBI:456216"/>
        <dbReference type="EC" id="2.7.1.11"/>
    </reaction>
</comment>
<comment type="cofactor">
    <cofactor evidence="1">
        <name>Mg(2+)</name>
        <dbReference type="ChEBI" id="CHEBI:18420"/>
    </cofactor>
</comment>
<comment type="activity regulation">
    <text evidence="1">Allosterically activated by ADP and other diphosphonucleosides, and allosterically inhibited by phosphoenolpyruvate.</text>
</comment>
<comment type="pathway">
    <text evidence="1">Carbohydrate degradation; glycolysis; D-glyceraldehyde 3-phosphate and glycerone phosphate from D-glucose: step 3/4.</text>
</comment>
<comment type="subunit">
    <text evidence="1">Homotetramer.</text>
</comment>
<comment type="subcellular location">
    <subcellularLocation>
        <location evidence="1">Cytoplasm</location>
    </subcellularLocation>
</comment>
<comment type="similarity">
    <text evidence="1">Belongs to the phosphofructokinase type A (PFKA) family. ATP-dependent PFK group I subfamily. Prokaryotic clade 'B1' sub-subfamily.</text>
</comment>